<comment type="function">
    <text evidence="1">With S4 and S12 plays an important role in translational accuracy.</text>
</comment>
<comment type="function">
    <text evidence="1">Located at the back of the 30S subunit body where it stabilizes the conformation of the head with respect to the body.</text>
</comment>
<comment type="subunit">
    <text evidence="1">Part of the 30S ribosomal subunit. Contacts proteins S4 and S8.</text>
</comment>
<comment type="domain">
    <text>The N-terminal domain interacts with the head of the 30S subunit; the C-terminal domain interacts with the body and contacts protein S4. The interaction surface between S4 and S5 is involved in control of translational fidelity.</text>
</comment>
<comment type="similarity">
    <text evidence="1">Belongs to the universal ribosomal protein uS5 family.</text>
</comment>
<proteinExistence type="inferred from homology"/>
<protein>
    <recommendedName>
        <fullName evidence="1">Small ribosomal subunit protein uS5</fullName>
    </recommendedName>
    <alternativeName>
        <fullName evidence="2">30S ribosomal protein S5</fullName>
    </alternativeName>
</protein>
<sequence>MAKMQAKVQQDERDDGLREKMISVNRVTKVVKGGRILGFAALTVVGDGDGRIGMGKGKAKEVPVAVQKAMDEARRKMVKVALKNGTLQHEVVGRHGAAKVLMMPAKEGTGVIAGGPMRAIFEVMGVTNVVTKSHGSTNPYNMVRATLDGLTKMSTPAEIAAKRGKSVEDILG</sequence>
<accession>Q1LI54</accession>
<organism>
    <name type="scientific">Cupriavidus metallidurans (strain ATCC 43123 / DSM 2839 / NBRC 102507 / CH34)</name>
    <name type="common">Ralstonia metallidurans</name>
    <dbReference type="NCBI Taxonomy" id="266264"/>
    <lineage>
        <taxon>Bacteria</taxon>
        <taxon>Pseudomonadati</taxon>
        <taxon>Pseudomonadota</taxon>
        <taxon>Betaproteobacteria</taxon>
        <taxon>Burkholderiales</taxon>
        <taxon>Burkholderiaceae</taxon>
        <taxon>Cupriavidus</taxon>
    </lineage>
</organism>
<dbReference type="EMBL" id="CP000352">
    <property type="protein sequence ID" value="ABF10172.1"/>
    <property type="molecule type" value="Genomic_DNA"/>
</dbReference>
<dbReference type="RefSeq" id="WP_008642951.1">
    <property type="nucleotide sequence ID" value="NC_007973.1"/>
</dbReference>
<dbReference type="SMR" id="Q1LI54"/>
<dbReference type="STRING" id="266264.Rmet_3300"/>
<dbReference type="GeneID" id="60826617"/>
<dbReference type="KEGG" id="rme:Rmet_3300"/>
<dbReference type="eggNOG" id="COG0098">
    <property type="taxonomic scope" value="Bacteria"/>
</dbReference>
<dbReference type="HOGENOM" id="CLU_065898_2_2_4"/>
<dbReference type="Proteomes" id="UP000002429">
    <property type="component" value="Chromosome"/>
</dbReference>
<dbReference type="GO" id="GO:0015935">
    <property type="term" value="C:small ribosomal subunit"/>
    <property type="evidence" value="ECO:0007669"/>
    <property type="project" value="InterPro"/>
</dbReference>
<dbReference type="GO" id="GO:0019843">
    <property type="term" value="F:rRNA binding"/>
    <property type="evidence" value="ECO:0007669"/>
    <property type="project" value="UniProtKB-UniRule"/>
</dbReference>
<dbReference type="GO" id="GO:0003735">
    <property type="term" value="F:structural constituent of ribosome"/>
    <property type="evidence" value="ECO:0007669"/>
    <property type="project" value="InterPro"/>
</dbReference>
<dbReference type="GO" id="GO:0006412">
    <property type="term" value="P:translation"/>
    <property type="evidence" value="ECO:0007669"/>
    <property type="project" value="UniProtKB-UniRule"/>
</dbReference>
<dbReference type="FunFam" id="3.30.160.20:FF:000001">
    <property type="entry name" value="30S ribosomal protein S5"/>
    <property type="match status" value="1"/>
</dbReference>
<dbReference type="FunFam" id="3.30.230.10:FF:000002">
    <property type="entry name" value="30S ribosomal protein S5"/>
    <property type="match status" value="1"/>
</dbReference>
<dbReference type="Gene3D" id="3.30.160.20">
    <property type="match status" value="1"/>
</dbReference>
<dbReference type="Gene3D" id="3.30.230.10">
    <property type="match status" value="1"/>
</dbReference>
<dbReference type="HAMAP" id="MF_01307_B">
    <property type="entry name" value="Ribosomal_uS5_B"/>
    <property type="match status" value="1"/>
</dbReference>
<dbReference type="InterPro" id="IPR020568">
    <property type="entry name" value="Ribosomal_Su5_D2-typ_SF"/>
</dbReference>
<dbReference type="InterPro" id="IPR000851">
    <property type="entry name" value="Ribosomal_uS5"/>
</dbReference>
<dbReference type="InterPro" id="IPR005712">
    <property type="entry name" value="Ribosomal_uS5_bac-type"/>
</dbReference>
<dbReference type="InterPro" id="IPR005324">
    <property type="entry name" value="Ribosomal_uS5_C"/>
</dbReference>
<dbReference type="InterPro" id="IPR013810">
    <property type="entry name" value="Ribosomal_uS5_N"/>
</dbReference>
<dbReference type="InterPro" id="IPR018192">
    <property type="entry name" value="Ribosomal_uS5_N_CS"/>
</dbReference>
<dbReference type="InterPro" id="IPR014721">
    <property type="entry name" value="Ribsml_uS5_D2-typ_fold_subgr"/>
</dbReference>
<dbReference type="NCBIfam" id="TIGR01021">
    <property type="entry name" value="rpsE_bact"/>
    <property type="match status" value="1"/>
</dbReference>
<dbReference type="PANTHER" id="PTHR48277">
    <property type="entry name" value="MITOCHONDRIAL RIBOSOMAL PROTEIN S5"/>
    <property type="match status" value="1"/>
</dbReference>
<dbReference type="PANTHER" id="PTHR48277:SF1">
    <property type="entry name" value="MITOCHONDRIAL RIBOSOMAL PROTEIN S5"/>
    <property type="match status" value="1"/>
</dbReference>
<dbReference type="Pfam" id="PF00333">
    <property type="entry name" value="Ribosomal_S5"/>
    <property type="match status" value="1"/>
</dbReference>
<dbReference type="Pfam" id="PF03719">
    <property type="entry name" value="Ribosomal_S5_C"/>
    <property type="match status" value="1"/>
</dbReference>
<dbReference type="SUPFAM" id="SSF54768">
    <property type="entry name" value="dsRNA-binding domain-like"/>
    <property type="match status" value="1"/>
</dbReference>
<dbReference type="SUPFAM" id="SSF54211">
    <property type="entry name" value="Ribosomal protein S5 domain 2-like"/>
    <property type="match status" value="1"/>
</dbReference>
<dbReference type="PROSITE" id="PS00585">
    <property type="entry name" value="RIBOSOMAL_S5"/>
    <property type="match status" value="1"/>
</dbReference>
<dbReference type="PROSITE" id="PS50881">
    <property type="entry name" value="S5_DSRBD"/>
    <property type="match status" value="1"/>
</dbReference>
<gene>
    <name evidence="1" type="primary">rpsE</name>
    <name type="ordered locus">Rmet_3300</name>
</gene>
<reference key="1">
    <citation type="journal article" date="2010" name="PLoS ONE">
        <title>The complete genome sequence of Cupriavidus metallidurans strain CH34, a master survivalist in harsh and anthropogenic environments.</title>
        <authorList>
            <person name="Janssen P.J."/>
            <person name="Van Houdt R."/>
            <person name="Moors H."/>
            <person name="Monsieurs P."/>
            <person name="Morin N."/>
            <person name="Michaux A."/>
            <person name="Benotmane M.A."/>
            <person name="Leys N."/>
            <person name="Vallaeys T."/>
            <person name="Lapidus A."/>
            <person name="Monchy S."/>
            <person name="Medigue C."/>
            <person name="Taghavi S."/>
            <person name="McCorkle S."/>
            <person name="Dunn J."/>
            <person name="van der Lelie D."/>
            <person name="Mergeay M."/>
        </authorList>
    </citation>
    <scope>NUCLEOTIDE SEQUENCE [LARGE SCALE GENOMIC DNA]</scope>
    <source>
        <strain>ATCC 43123 / DSM 2839 / NBRC 102507 / CH34</strain>
    </source>
</reference>
<keyword id="KW-1185">Reference proteome</keyword>
<keyword id="KW-0687">Ribonucleoprotein</keyword>
<keyword id="KW-0689">Ribosomal protein</keyword>
<keyword id="KW-0694">RNA-binding</keyword>
<keyword id="KW-0699">rRNA-binding</keyword>
<feature type="chain" id="PRO_0000323179" description="Small ribosomal subunit protein uS5">
    <location>
        <begin position="1"/>
        <end position="172"/>
    </location>
</feature>
<feature type="domain" description="S5 DRBM" evidence="1">
    <location>
        <begin position="17"/>
        <end position="80"/>
    </location>
</feature>
<name>RS5_CUPMC</name>
<evidence type="ECO:0000255" key="1">
    <source>
        <dbReference type="HAMAP-Rule" id="MF_01307"/>
    </source>
</evidence>
<evidence type="ECO:0000305" key="2"/>